<gene>
    <name type="primary">polA</name>
    <name type="ordered locus">RF_1239</name>
</gene>
<accession>Q9RAA9</accession>
<accession>Q4UK45</accession>
<protein>
    <recommendedName>
        <fullName>DNA polymerase I</fullName>
        <shortName>POL I</shortName>
        <ecNumber evidence="1">2.7.7.7</ecNumber>
    </recommendedName>
</protein>
<reference key="1">
    <citation type="journal article" date="1999" name="Mol. Biol. Evol.">
        <title>Genome degradation is an ongoing process in Rickettsia.</title>
        <authorList>
            <person name="Andersson J.O."/>
            <person name="Andersson S.G.E."/>
        </authorList>
    </citation>
    <scope>NUCLEOTIDE SEQUENCE [GENOMIC DNA]</scope>
</reference>
<reference key="2">
    <citation type="journal article" date="2005" name="PLoS Biol.">
        <title>The genome sequence of Rickettsia felis identifies the first putative conjugative plasmid in an obligate intracellular parasite.</title>
        <authorList>
            <person name="Ogata H."/>
            <person name="Renesto P."/>
            <person name="Audic S."/>
            <person name="Robert C."/>
            <person name="Blanc G."/>
            <person name="Fournier P.-E."/>
            <person name="Parinello H."/>
            <person name="Claverie J.-M."/>
            <person name="Raoult D."/>
        </authorList>
    </citation>
    <scope>NUCLEOTIDE SEQUENCE [LARGE SCALE GENOMIC DNA]</scope>
    <source>
        <strain>ATCC VR-1525 / URRWXCal2</strain>
    </source>
</reference>
<reference key="3">
    <citation type="journal article" date="2000" name="Science">
        <title>Selfish DNA in protein-coding genes of Rickettsia.</title>
        <authorList>
            <person name="Ogata H."/>
            <person name="Audic S."/>
            <person name="Barbe V."/>
            <person name="Artiguenave F."/>
            <person name="Fournier P.-E."/>
            <person name="Raoult D."/>
            <person name="Claverie J.-M."/>
        </authorList>
    </citation>
    <scope>DOMAIN RPE1</scope>
</reference>
<dbReference type="EC" id="2.7.7.7" evidence="1"/>
<dbReference type="EMBL" id="AJ238763">
    <property type="protein sequence ID" value="CAB56067.1"/>
    <property type="molecule type" value="Genomic_DNA"/>
</dbReference>
<dbReference type="EMBL" id="CP000053">
    <property type="protein sequence ID" value="AAY62090.1"/>
    <property type="molecule type" value="Genomic_DNA"/>
</dbReference>
<dbReference type="SMR" id="Q9RAA9"/>
<dbReference type="STRING" id="315456.RF_1239"/>
<dbReference type="KEGG" id="rfe:RF_1239"/>
<dbReference type="eggNOG" id="COG0258">
    <property type="taxonomic scope" value="Bacteria"/>
</dbReference>
<dbReference type="eggNOG" id="COG0749">
    <property type="taxonomic scope" value="Bacteria"/>
</dbReference>
<dbReference type="HOGENOM" id="CLU_004675_0_0_5"/>
<dbReference type="OrthoDB" id="9806424at2"/>
<dbReference type="Proteomes" id="UP000008548">
    <property type="component" value="Chromosome"/>
</dbReference>
<dbReference type="GO" id="GO:0008409">
    <property type="term" value="F:5'-3' exonuclease activity"/>
    <property type="evidence" value="ECO:0007669"/>
    <property type="project" value="InterPro"/>
</dbReference>
<dbReference type="GO" id="GO:0003677">
    <property type="term" value="F:DNA binding"/>
    <property type="evidence" value="ECO:0007669"/>
    <property type="project" value="UniProtKB-KW"/>
</dbReference>
<dbReference type="GO" id="GO:0003887">
    <property type="term" value="F:DNA-directed DNA polymerase activity"/>
    <property type="evidence" value="ECO:0007669"/>
    <property type="project" value="UniProtKB-KW"/>
</dbReference>
<dbReference type="GO" id="GO:0006261">
    <property type="term" value="P:DNA-templated DNA replication"/>
    <property type="evidence" value="ECO:0007669"/>
    <property type="project" value="InterPro"/>
</dbReference>
<dbReference type="GO" id="GO:0006302">
    <property type="term" value="P:double-strand break repair"/>
    <property type="evidence" value="ECO:0007669"/>
    <property type="project" value="TreeGrafter"/>
</dbReference>
<dbReference type="CDD" id="cd08637">
    <property type="entry name" value="DNA_pol_A_pol_I_C"/>
    <property type="match status" value="1"/>
</dbReference>
<dbReference type="CDD" id="cd09898">
    <property type="entry name" value="H3TH_53EXO"/>
    <property type="match status" value="1"/>
</dbReference>
<dbReference type="CDD" id="cd09859">
    <property type="entry name" value="PIN_53EXO"/>
    <property type="match status" value="1"/>
</dbReference>
<dbReference type="FunFam" id="1.10.150.20:FF:000002">
    <property type="entry name" value="DNA polymerase I"/>
    <property type="match status" value="1"/>
</dbReference>
<dbReference type="FunFam" id="1.10.150.20:FF:000003">
    <property type="entry name" value="DNA polymerase I"/>
    <property type="match status" value="1"/>
</dbReference>
<dbReference type="FunFam" id="1.20.1060.10:FF:000001">
    <property type="entry name" value="DNA polymerase I"/>
    <property type="match status" value="1"/>
</dbReference>
<dbReference type="Gene3D" id="3.30.70.370">
    <property type="match status" value="1"/>
</dbReference>
<dbReference type="Gene3D" id="1.10.150.20">
    <property type="entry name" value="5' to 3' exonuclease, C-terminal subdomain"/>
    <property type="match status" value="2"/>
</dbReference>
<dbReference type="Gene3D" id="3.40.50.1010">
    <property type="entry name" value="5'-nuclease"/>
    <property type="match status" value="1"/>
</dbReference>
<dbReference type="Gene3D" id="3.30.420.10">
    <property type="entry name" value="Ribonuclease H-like superfamily/Ribonuclease H"/>
    <property type="match status" value="1"/>
</dbReference>
<dbReference type="Gene3D" id="1.20.1060.10">
    <property type="entry name" value="Taq DNA Polymerase, Chain T, domain 4"/>
    <property type="match status" value="1"/>
</dbReference>
<dbReference type="InterPro" id="IPR020046">
    <property type="entry name" value="5-3_exonucl_a-hlix_arch_N"/>
</dbReference>
<dbReference type="InterPro" id="IPR002421">
    <property type="entry name" value="5-3_exonuclease"/>
</dbReference>
<dbReference type="InterPro" id="IPR036279">
    <property type="entry name" value="5-3_exonuclease_C_sf"/>
</dbReference>
<dbReference type="InterPro" id="IPR019760">
    <property type="entry name" value="DNA-dir_DNA_pol_A_CS"/>
</dbReference>
<dbReference type="InterPro" id="IPR001098">
    <property type="entry name" value="DNA-dir_DNA_pol_A_palm_dom"/>
</dbReference>
<dbReference type="InterPro" id="IPR043502">
    <property type="entry name" value="DNA/RNA_pol_sf"/>
</dbReference>
<dbReference type="InterPro" id="IPR020045">
    <property type="entry name" value="DNA_polI_H3TH"/>
</dbReference>
<dbReference type="InterPro" id="IPR018320">
    <property type="entry name" value="DNA_polymerase_1"/>
</dbReference>
<dbReference type="InterPro" id="IPR002298">
    <property type="entry name" value="DNA_polymerase_A"/>
</dbReference>
<dbReference type="InterPro" id="IPR008918">
    <property type="entry name" value="HhH2"/>
</dbReference>
<dbReference type="InterPro" id="IPR029060">
    <property type="entry name" value="PIN-like_dom_sf"/>
</dbReference>
<dbReference type="InterPro" id="IPR012337">
    <property type="entry name" value="RNaseH-like_sf"/>
</dbReference>
<dbReference type="InterPro" id="IPR036397">
    <property type="entry name" value="RNaseH_sf"/>
</dbReference>
<dbReference type="InterPro" id="IPR005728">
    <property type="entry name" value="RPE1"/>
</dbReference>
<dbReference type="NCBIfam" id="TIGR00593">
    <property type="entry name" value="pola"/>
    <property type="match status" value="1"/>
</dbReference>
<dbReference type="NCBIfam" id="NF004397">
    <property type="entry name" value="PRK05755.1"/>
    <property type="match status" value="1"/>
</dbReference>
<dbReference type="NCBIfam" id="TIGR01045">
    <property type="entry name" value="RPE1"/>
    <property type="match status" value="1"/>
</dbReference>
<dbReference type="PANTHER" id="PTHR10133">
    <property type="entry name" value="DNA POLYMERASE I"/>
    <property type="match status" value="1"/>
</dbReference>
<dbReference type="PANTHER" id="PTHR10133:SF27">
    <property type="entry name" value="DNA POLYMERASE NU"/>
    <property type="match status" value="1"/>
</dbReference>
<dbReference type="Pfam" id="PF01367">
    <property type="entry name" value="5_3_exonuc"/>
    <property type="match status" value="1"/>
</dbReference>
<dbReference type="Pfam" id="PF02739">
    <property type="entry name" value="5_3_exonuc_N"/>
    <property type="match status" value="1"/>
</dbReference>
<dbReference type="Pfam" id="PF00476">
    <property type="entry name" value="DNA_pol_A"/>
    <property type="match status" value="1"/>
</dbReference>
<dbReference type="PRINTS" id="PR00868">
    <property type="entry name" value="DNAPOLI"/>
</dbReference>
<dbReference type="SMART" id="SM00475">
    <property type="entry name" value="53EXOc"/>
    <property type="match status" value="1"/>
</dbReference>
<dbReference type="SMART" id="SM00279">
    <property type="entry name" value="HhH2"/>
    <property type="match status" value="1"/>
</dbReference>
<dbReference type="SMART" id="SM00482">
    <property type="entry name" value="POLAc"/>
    <property type="match status" value="1"/>
</dbReference>
<dbReference type="SUPFAM" id="SSF47807">
    <property type="entry name" value="5' to 3' exonuclease, C-terminal subdomain"/>
    <property type="match status" value="1"/>
</dbReference>
<dbReference type="SUPFAM" id="SSF56672">
    <property type="entry name" value="DNA/RNA polymerases"/>
    <property type="match status" value="1"/>
</dbReference>
<dbReference type="SUPFAM" id="SSF88723">
    <property type="entry name" value="PIN domain-like"/>
    <property type="match status" value="1"/>
</dbReference>
<dbReference type="SUPFAM" id="SSF53098">
    <property type="entry name" value="Ribonuclease H-like"/>
    <property type="match status" value="1"/>
</dbReference>
<dbReference type="PROSITE" id="PS00447">
    <property type="entry name" value="DNA_POLYMERASE_A"/>
    <property type="match status" value="1"/>
</dbReference>
<name>DPO1_RICFE</name>
<keyword id="KW-0227">DNA damage</keyword>
<keyword id="KW-0234">DNA repair</keyword>
<keyword id="KW-0235">DNA replication</keyword>
<keyword id="KW-0238">DNA-binding</keyword>
<keyword id="KW-0239">DNA-directed DNA polymerase</keyword>
<keyword id="KW-0269">Exonuclease</keyword>
<keyword id="KW-0378">Hydrolase</keyword>
<keyword id="KW-0540">Nuclease</keyword>
<keyword id="KW-0548">Nucleotidyltransferase</keyword>
<keyword id="KW-0808">Transferase</keyword>
<comment type="function">
    <text evidence="1">In addition to polymerase activity, this DNA polymerase exhibits 5'-3' exonuclease activity.</text>
</comment>
<comment type="catalytic activity">
    <reaction evidence="1">
        <text>DNA(n) + a 2'-deoxyribonucleoside 5'-triphosphate = DNA(n+1) + diphosphate</text>
        <dbReference type="Rhea" id="RHEA:22508"/>
        <dbReference type="Rhea" id="RHEA-COMP:17339"/>
        <dbReference type="Rhea" id="RHEA-COMP:17340"/>
        <dbReference type="ChEBI" id="CHEBI:33019"/>
        <dbReference type="ChEBI" id="CHEBI:61560"/>
        <dbReference type="ChEBI" id="CHEBI:173112"/>
        <dbReference type="EC" id="2.7.7.7"/>
    </reaction>
</comment>
<comment type="subunit">
    <text evidence="1">Single-chain monomer with multiple functions.</text>
</comment>
<comment type="similarity">
    <text evidence="2">Belongs to the DNA polymerase type-A family.</text>
</comment>
<evidence type="ECO:0000250" key="1">
    <source>
        <dbReference type="UniProtKB" id="P52026"/>
    </source>
</evidence>
<evidence type="ECO:0000305" key="2"/>
<proteinExistence type="inferred from homology"/>
<feature type="chain" id="PRO_0000101249" description="DNA polymerase I">
    <location>
        <begin position="1"/>
        <end position="922"/>
    </location>
</feature>
<feature type="domain" description="5'-3' exonuclease">
    <location>
        <begin position="1"/>
        <end position="283"/>
    </location>
</feature>
<feature type="domain" description="RPE1 insert">
    <location>
        <begin position="439"/>
        <end position="487"/>
    </location>
</feature>
<sequence length="922" mass="104006">MTQKNTLLLIDGYGFVFRAYYAQQPLTSPKGEPVGALYGFASMLLKLLSDFKPKHVAVVFDSGGKNFRHHIYPEYKANRPPPPEDLVVQLPLVRDVASNLNFPILEKNGYEADDIIATFAAKTAALGEDVVVISSDKDLLQLMGENIKIYDPLKGKYITEDDVVKKFGTTSDKLREVMALIGDRSDNIPGVPSIGPKTASSLITQFGSVENIFNSLEQVSSLKQRETLQNSKEAALISWQLIGLDSNVDLDFQLNNLEWSPPNSDKLTGFLQEYGFKSLYKRAENLFDIKINDHKEIVENKVTEAKEISNASELADFAKKAEKIGIFGIYLLQHKGDNVALILSLQNQSYIIKISNTSHDLFSYNTKNNNDWFSDIIFNLLTDKSIRKITYSLKPLLKFYAEQSHEITAIEDLELMQYALSAGLSQKNLFEEALKEDNRHLSKPAYREEFKGDTEALATAAYKSVREDASTGSTSKLPLETKFGKMSNVINESARIVAEFTSLYKQNILELKDNKAFRLYSNIDLPICFILDKMEKIGIKVDANYLNQLSAEFGAEILKLEEEIFALSGTKFNIGSPKQLGEILFEKMQLPFGKASAKASSYSTGAEILEKLSEHGYNIADLLLRWRQLTKLKNTYTDSLPKQIDNITHRVHTTFLQTSTTTGRLSSQEPNLQNVPIRSSEGNKIRQAFIAEEGYKLISADYSQIELRILSHIANIDALKQAFINKDDIHTQTACQIFNLQKHELTSEHRRKAKAINFGIIYGISAFGLAKQLNVSNGEASEYIKKYFAEYKGVQEYMEQTKAFASSNGYVINFFGRKCFVPLIHDKKLKQFAERAAINAPIQGTNADIIKIAMINLDQEIEKNNLKTRLVLQIHDELLFEVPEDEVELVTPIIKKIMENSTNMDVPIITEIRVGNNWMEIH</sequence>
<organism>
    <name type="scientific">Rickettsia felis (strain ATCC VR-1525 / URRWXCal2)</name>
    <name type="common">Rickettsia azadi</name>
    <dbReference type="NCBI Taxonomy" id="315456"/>
    <lineage>
        <taxon>Bacteria</taxon>
        <taxon>Pseudomonadati</taxon>
        <taxon>Pseudomonadota</taxon>
        <taxon>Alphaproteobacteria</taxon>
        <taxon>Rickettsiales</taxon>
        <taxon>Rickettsiaceae</taxon>
        <taxon>Rickettsieae</taxon>
        <taxon>Rickettsia</taxon>
        <taxon>spotted fever group</taxon>
    </lineage>
</organism>